<name>ESR2_ORENI</name>
<protein>
    <recommendedName>
        <fullName>Estrogen receptor beta</fullName>
        <shortName>ER-beta</shortName>
    </recommendedName>
    <alternativeName>
        <fullName>Nuclear receptor subfamily 3 group A member 2</fullName>
    </alternativeName>
</protein>
<proteinExistence type="evidence at transcript level"/>
<accession>Q9YH32</accession>
<comment type="function">
    <text>Binds estrogens with an affinity similar to that of ER-alpha, and activates expression of reporter genes containing estrogen response elements (ERE) in an estrogen-dependent manner.</text>
</comment>
<comment type="subunit">
    <text evidence="1">Binds DNA as a homodimer. Can form a heterodimer with ER-alpha (By similarity).</text>
</comment>
<comment type="subcellular location">
    <subcellularLocation>
        <location>Nucleus</location>
    </subcellularLocation>
</comment>
<comment type="domain">
    <text>Composed of three domains: a modulating N-terminal domain, a DNA-binding domain and a C-terminal ligand-binding domain.</text>
</comment>
<comment type="similarity">
    <text evidence="5">Belongs to the nuclear hormone receptor family. NR3 subfamily.</text>
</comment>
<gene>
    <name type="primary">esr2</name>
    <name type="synonym">nr3a2</name>
</gene>
<reference key="1">
    <citation type="submission" date="1996-10" db="EMBL/GenBank/DDBJ databases">
        <title>cDNA sequence of tilapia type beta estrogen receptor.</title>
        <authorList>
            <person name="Chang X.T."/>
            <person name="Kobayashi T."/>
            <person name="Todo T."/>
            <person name="Yoshiura Y."/>
            <person name="Ikeuchi T."/>
            <person name="Kajiura H."/>
            <person name="Nakamura M."/>
            <person name="Nagahama Y."/>
        </authorList>
    </citation>
    <scope>NUCLEOTIDE SEQUENCE [MRNA]</scope>
</reference>
<keyword id="KW-0238">DNA-binding</keyword>
<keyword id="KW-0446">Lipid-binding</keyword>
<keyword id="KW-0479">Metal-binding</keyword>
<keyword id="KW-0539">Nucleus</keyword>
<keyword id="KW-0675">Receptor</keyword>
<keyword id="KW-1185">Reference proteome</keyword>
<keyword id="KW-0754">Steroid-binding</keyword>
<keyword id="KW-0804">Transcription</keyword>
<keyword id="KW-0805">Transcription regulation</keyword>
<keyword id="KW-0862">Zinc</keyword>
<keyword id="KW-0863">Zinc-finger</keyword>
<dbReference type="EMBL" id="U75605">
    <property type="protein sequence ID" value="AAD00246.1"/>
    <property type="molecule type" value="mRNA"/>
</dbReference>
<dbReference type="RefSeq" id="NP_001266703.1">
    <property type="nucleotide sequence ID" value="NM_001279774.1"/>
</dbReference>
<dbReference type="RefSeq" id="XP_005475012.1">
    <property type="nucleotide sequence ID" value="XM_005474955.3"/>
</dbReference>
<dbReference type="SMR" id="Q9YH32"/>
<dbReference type="FunCoup" id="Q9YH32">
    <property type="interactions" value="569"/>
</dbReference>
<dbReference type="STRING" id="8128.ENSONIP00000053932"/>
<dbReference type="Ensembl" id="ENSONIT00000007095.2">
    <property type="protein sequence ID" value="ENSONIP00000007090.1"/>
    <property type="gene ID" value="ENSONIG00000005633.2"/>
</dbReference>
<dbReference type="GeneID" id="100534515"/>
<dbReference type="KEGG" id="onl:100534515"/>
<dbReference type="CTD" id="317734"/>
<dbReference type="eggNOG" id="KOG3575">
    <property type="taxonomic scope" value="Eukaryota"/>
</dbReference>
<dbReference type="GeneTree" id="ENSGT00940000156116"/>
<dbReference type="HOGENOM" id="CLU_007368_11_1_1"/>
<dbReference type="InParanoid" id="Q9YH32"/>
<dbReference type="OrthoDB" id="5799427at2759"/>
<dbReference type="Proteomes" id="UP000005207">
    <property type="component" value="Linkage group LG15"/>
</dbReference>
<dbReference type="GO" id="GO:0005634">
    <property type="term" value="C:nucleus"/>
    <property type="evidence" value="ECO:0007669"/>
    <property type="project" value="UniProtKB-SubCell"/>
</dbReference>
<dbReference type="GO" id="GO:0042562">
    <property type="term" value="F:hormone binding"/>
    <property type="evidence" value="ECO:0007669"/>
    <property type="project" value="UniProtKB-ARBA"/>
</dbReference>
<dbReference type="GO" id="GO:0030284">
    <property type="term" value="F:nuclear estrogen receptor activity"/>
    <property type="evidence" value="ECO:0007669"/>
    <property type="project" value="InterPro"/>
</dbReference>
<dbReference type="GO" id="GO:0043565">
    <property type="term" value="F:sequence-specific DNA binding"/>
    <property type="evidence" value="ECO:0007669"/>
    <property type="project" value="InterPro"/>
</dbReference>
<dbReference type="GO" id="GO:0005496">
    <property type="term" value="F:steroid binding"/>
    <property type="evidence" value="ECO:0000250"/>
    <property type="project" value="UniProtKB"/>
</dbReference>
<dbReference type="GO" id="GO:0008270">
    <property type="term" value="F:zinc ion binding"/>
    <property type="evidence" value="ECO:0007669"/>
    <property type="project" value="UniProtKB-KW"/>
</dbReference>
<dbReference type="GO" id="GO:0071392">
    <property type="term" value="P:cellular response to estradiol stimulus"/>
    <property type="evidence" value="ECO:0007669"/>
    <property type="project" value="InterPro"/>
</dbReference>
<dbReference type="GO" id="GO:0030520">
    <property type="term" value="P:estrogen receptor signaling pathway"/>
    <property type="evidence" value="ECO:0007669"/>
    <property type="project" value="InterPro"/>
</dbReference>
<dbReference type="CDD" id="cd07171">
    <property type="entry name" value="NR_DBD_ER"/>
    <property type="match status" value="1"/>
</dbReference>
<dbReference type="CDD" id="cd06949">
    <property type="entry name" value="NR_LBD_ER"/>
    <property type="match status" value="1"/>
</dbReference>
<dbReference type="FunFam" id="1.10.565.10:FF:000010">
    <property type="entry name" value="Estrogen receptor"/>
    <property type="match status" value="1"/>
</dbReference>
<dbReference type="FunFam" id="3.30.50.10:FF:000014">
    <property type="entry name" value="Estrogen receptor beta"/>
    <property type="match status" value="1"/>
</dbReference>
<dbReference type="Gene3D" id="3.30.50.10">
    <property type="entry name" value="Erythroid Transcription Factor GATA-1, subunit A"/>
    <property type="match status" value="1"/>
</dbReference>
<dbReference type="Gene3D" id="1.10.565.10">
    <property type="entry name" value="Retinoid X Receptor"/>
    <property type="match status" value="1"/>
</dbReference>
<dbReference type="InterPro" id="IPR021064">
    <property type="entry name" value="ER-beta-like_N"/>
</dbReference>
<dbReference type="InterPro" id="IPR028355">
    <property type="entry name" value="ER-beta/gamma"/>
</dbReference>
<dbReference type="InterPro" id="IPR024178">
    <property type="entry name" value="Est_rcpt/est-rel_rcp"/>
</dbReference>
<dbReference type="InterPro" id="IPR035500">
    <property type="entry name" value="NHR-like_dom_sf"/>
</dbReference>
<dbReference type="InterPro" id="IPR000536">
    <property type="entry name" value="Nucl_hrmn_rcpt_lig-bd"/>
</dbReference>
<dbReference type="InterPro" id="IPR050200">
    <property type="entry name" value="Nuclear_hormone_rcpt_NR3"/>
</dbReference>
<dbReference type="InterPro" id="IPR001723">
    <property type="entry name" value="Nuclear_hrmn_rcpt"/>
</dbReference>
<dbReference type="InterPro" id="IPR001628">
    <property type="entry name" value="Znf_hrmn_rcpt"/>
</dbReference>
<dbReference type="InterPro" id="IPR013088">
    <property type="entry name" value="Znf_NHR/GATA"/>
</dbReference>
<dbReference type="PANTHER" id="PTHR48092">
    <property type="entry name" value="KNIRPS-RELATED PROTEIN-RELATED"/>
    <property type="match status" value="1"/>
</dbReference>
<dbReference type="Pfam" id="PF12497">
    <property type="entry name" value="ERbeta_N"/>
    <property type="match status" value="1"/>
</dbReference>
<dbReference type="Pfam" id="PF00104">
    <property type="entry name" value="Hormone_recep"/>
    <property type="match status" value="1"/>
</dbReference>
<dbReference type="Pfam" id="PF00105">
    <property type="entry name" value="zf-C4"/>
    <property type="match status" value="1"/>
</dbReference>
<dbReference type="PIRSF" id="PIRSF500102">
    <property type="entry name" value="ER-b"/>
    <property type="match status" value="1"/>
</dbReference>
<dbReference type="PIRSF" id="PIRSF002527">
    <property type="entry name" value="ER-like_NR"/>
    <property type="match status" value="1"/>
</dbReference>
<dbReference type="PRINTS" id="PR00398">
    <property type="entry name" value="STRDHORMONER"/>
</dbReference>
<dbReference type="PRINTS" id="PR00047">
    <property type="entry name" value="STROIDFINGER"/>
</dbReference>
<dbReference type="SMART" id="SM00430">
    <property type="entry name" value="HOLI"/>
    <property type="match status" value="1"/>
</dbReference>
<dbReference type="SMART" id="SM00399">
    <property type="entry name" value="ZnF_C4"/>
    <property type="match status" value="1"/>
</dbReference>
<dbReference type="SUPFAM" id="SSF57716">
    <property type="entry name" value="Glucocorticoid receptor-like (DNA-binding domain)"/>
    <property type="match status" value="1"/>
</dbReference>
<dbReference type="SUPFAM" id="SSF48508">
    <property type="entry name" value="Nuclear receptor ligand-binding domain"/>
    <property type="match status" value="1"/>
</dbReference>
<dbReference type="PROSITE" id="PS51843">
    <property type="entry name" value="NR_LBD"/>
    <property type="match status" value="1"/>
</dbReference>
<dbReference type="PROSITE" id="PS00031">
    <property type="entry name" value="NUCLEAR_REC_DBD_1"/>
    <property type="match status" value="1"/>
</dbReference>
<dbReference type="PROSITE" id="PS51030">
    <property type="entry name" value="NUCLEAR_REC_DBD_2"/>
    <property type="match status" value="1"/>
</dbReference>
<evidence type="ECO:0000250" key="1"/>
<evidence type="ECO:0000255" key="2">
    <source>
        <dbReference type="PROSITE-ProRule" id="PRU00407"/>
    </source>
</evidence>
<evidence type="ECO:0000255" key="3">
    <source>
        <dbReference type="PROSITE-ProRule" id="PRU01189"/>
    </source>
</evidence>
<evidence type="ECO:0000256" key="4">
    <source>
        <dbReference type="SAM" id="MobiDB-lite"/>
    </source>
</evidence>
<evidence type="ECO:0000305" key="5"/>
<sequence>MMAAASSPEKLLQLQEVDSSRAGSRILSPILGSSSPGLSHETSQPICIRSPYTDLGHDFTTIPFYSPTIFSYGGPSISECSSVHQSLSASLFWPSHGRVGTPITLHCPQGRSQQGQSAQTPWDSVITTSKSVRRRSQESEESMVSSGGKADLHYCAVCHDYASGYHYGVWSCEGCKAFFKRSIQGHNDYICPATNQCTIDKNRRKSCQACRLRKCYEVGMTKCGIRKERGNYRNSQARRLTRLSSQGKTAEPKGITGPAEGSLNKPEKPALTPEQLIERILEAEPPEIYLVKDAKRPLTEASVMMLLTNLADKELVHMISWAKKIPGFVELSLVDQVHLLECCWLEVLMIGLMWRSVDHPGKLIFCPDLSLSREEGSCVQGFVEIFDMLIAATTRVRELKLQREEYVCLKAMILLNSNMCLSSSDCSEDLQSRSKLLRLLDAMTDALVLAIGKTGLTFRQQYTRLAHLLMLLSHIRHVSNKGMDHLHCMKMKNIVPLYDLLLEMLDAHIMHSSCLPHQPPQQDSKDQSEVPAPLHSSAGGPSNTWTPSSARAGGESQ</sequence>
<feature type="chain" id="PRO_0000053657" description="Estrogen receptor beta">
    <location>
        <begin position="1"/>
        <end position="557"/>
    </location>
</feature>
<feature type="domain" description="NR LBD" evidence="3">
    <location>
        <begin position="272"/>
        <end position="508"/>
    </location>
</feature>
<feature type="DNA-binding region" description="Nuclear receptor" evidence="2">
    <location>
        <begin position="155"/>
        <end position="220"/>
    </location>
</feature>
<feature type="zinc finger region" description="NR C4-type" evidence="2">
    <location>
        <begin position="155"/>
        <end position="175"/>
    </location>
</feature>
<feature type="zinc finger region" description="NR C4-type" evidence="2">
    <location>
        <begin position="191"/>
        <end position="215"/>
    </location>
</feature>
<feature type="region of interest" description="Modulating">
    <location>
        <begin position="1"/>
        <end position="154"/>
    </location>
</feature>
<feature type="region of interest" description="Disordered" evidence="4">
    <location>
        <begin position="240"/>
        <end position="268"/>
    </location>
</feature>
<feature type="region of interest" description="Disordered" evidence="4">
    <location>
        <begin position="513"/>
        <end position="557"/>
    </location>
</feature>
<feature type="compositionally biased region" description="Polar residues" evidence="4">
    <location>
        <begin position="539"/>
        <end position="557"/>
    </location>
</feature>
<organism>
    <name type="scientific">Oreochromis niloticus</name>
    <name type="common">Nile tilapia</name>
    <name type="synonym">Tilapia nilotica</name>
    <dbReference type="NCBI Taxonomy" id="8128"/>
    <lineage>
        <taxon>Eukaryota</taxon>
        <taxon>Metazoa</taxon>
        <taxon>Chordata</taxon>
        <taxon>Craniata</taxon>
        <taxon>Vertebrata</taxon>
        <taxon>Euteleostomi</taxon>
        <taxon>Actinopterygii</taxon>
        <taxon>Neopterygii</taxon>
        <taxon>Teleostei</taxon>
        <taxon>Neoteleostei</taxon>
        <taxon>Acanthomorphata</taxon>
        <taxon>Ovalentaria</taxon>
        <taxon>Cichlomorphae</taxon>
        <taxon>Cichliformes</taxon>
        <taxon>Cichlidae</taxon>
        <taxon>African cichlids</taxon>
        <taxon>Pseudocrenilabrinae</taxon>
        <taxon>Oreochromini</taxon>
        <taxon>Oreochromis</taxon>
    </lineage>
</organism>